<comment type="function">
    <text evidence="1">Catalyzes the acyloin condensation reaction between C atoms 2 and 3 of pyruvate and glyceraldehyde 3-phosphate to yield 1-deoxy-D-xylulose-5-phosphate (DXP).</text>
</comment>
<comment type="catalytic activity">
    <reaction evidence="1">
        <text>D-glyceraldehyde 3-phosphate + pyruvate + H(+) = 1-deoxy-D-xylulose 5-phosphate + CO2</text>
        <dbReference type="Rhea" id="RHEA:12605"/>
        <dbReference type="ChEBI" id="CHEBI:15361"/>
        <dbReference type="ChEBI" id="CHEBI:15378"/>
        <dbReference type="ChEBI" id="CHEBI:16526"/>
        <dbReference type="ChEBI" id="CHEBI:57792"/>
        <dbReference type="ChEBI" id="CHEBI:59776"/>
        <dbReference type="EC" id="2.2.1.7"/>
    </reaction>
</comment>
<comment type="cofactor">
    <cofactor evidence="1">
        <name>Mg(2+)</name>
        <dbReference type="ChEBI" id="CHEBI:18420"/>
    </cofactor>
    <text evidence="1">Binds 1 Mg(2+) ion per subunit.</text>
</comment>
<comment type="cofactor">
    <cofactor evidence="1">
        <name>thiamine diphosphate</name>
        <dbReference type="ChEBI" id="CHEBI:58937"/>
    </cofactor>
    <text evidence="1">Binds 1 thiamine pyrophosphate per subunit.</text>
</comment>
<comment type="pathway">
    <text evidence="1">Metabolic intermediate biosynthesis; 1-deoxy-D-xylulose 5-phosphate biosynthesis; 1-deoxy-D-xylulose 5-phosphate from D-glyceraldehyde 3-phosphate and pyruvate: step 1/1.</text>
</comment>
<comment type="subunit">
    <text evidence="1">Homodimer.</text>
</comment>
<comment type="similarity">
    <text evidence="1">Belongs to the transketolase family. DXPS subfamily.</text>
</comment>
<gene>
    <name evidence="1" type="primary">dxs</name>
    <name type="ordered locus">FTF1018c</name>
</gene>
<organism>
    <name type="scientific">Francisella tularensis subsp. tularensis (strain FSC 198)</name>
    <dbReference type="NCBI Taxonomy" id="393115"/>
    <lineage>
        <taxon>Bacteria</taxon>
        <taxon>Pseudomonadati</taxon>
        <taxon>Pseudomonadota</taxon>
        <taxon>Gammaproteobacteria</taxon>
        <taxon>Thiotrichales</taxon>
        <taxon>Francisellaceae</taxon>
        <taxon>Francisella</taxon>
    </lineage>
</organism>
<feature type="chain" id="PRO_1000019025" description="1-deoxy-D-xylulose-5-phosphate synthase">
    <location>
        <begin position="1"/>
        <end position="615"/>
    </location>
</feature>
<feature type="binding site" evidence="1">
    <location>
        <position position="76"/>
    </location>
    <ligand>
        <name>thiamine diphosphate</name>
        <dbReference type="ChEBI" id="CHEBI:58937"/>
    </ligand>
</feature>
<feature type="binding site" evidence="1">
    <location>
        <begin position="117"/>
        <end position="119"/>
    </location>
    <ligand>
        <name>thiamine diphosphate</name>
        <dbReference type="ChEBI" id="CHEBI:58937"/>
    </ligand>
</feature>
<feature type="binding site" evidence="1">
    <location>
        <position position="148"/>
    </location>
    <ligand>
        <name>Mg(2+)</name>
        <dbReference type="ChEBI" id="CHEBI:18420"/>
    </ligand>
</feature>
<feature type="binding site" evidence="1">
    <location>
        <begin position="149"/>
        <end position="150"/>
    </location>
    <ligand>
        <name>thiamine diphosphate</name>
        <dbReference type="ChEBI" id="CHEBI:58937"/>
    </ligand>
</feature>
<feature type="binding site" evidence="1">
    <location>
        <position position="177"/>
    </location>
    <ligand>
        <name>Mg(2+)</name>
        <dbReference type="ChEBI" id="CHEBI:18420"/>
    </ligand>
</feature>
<feature type="binding site" evidence="1">
    <location>
        <position position="177"/>
    </location>
    <ligand>
        <name>thiamine diphosphate</name>
        <dbReference type="ChEBI" id="CHEBI:58937"/>
    </ligand>
</feature>
<feature type="binding site" evidence="1">
    <location>
        <position position="284"/>
    </location>
    <ligand>
        <name>thiamine diphosphate</name>
        <dbReference type="ChEBI" id="CHEBI:58937"/>
    </ligand>
</feature>
<feature type="binding site" evidence="1">
    <location>
        <position position="365"/>
    </location>
    <ligand>
        <name>thiamine diphosphate</name>
        <dbReference type="ChEBI" id="CHEBI:58937"/>
    </ligand>
</feature>
<dbReference type="EC" id="2.2.1.7" evidence="1"/>
<dbReference type="EMBL" id="AM286280">
    <property type="protein sequence ID" value="CAL09034.1"/>
    <property type="molecule type" value="Genomic_DNA"/>
</dbReference>
<dbReference type="RefSeq" id="WP_003021112.1">
    <property type="nucleotide sequence ID" value="NC_008245.1"/>
</dbReference>
<dbReference type="SMR" id="Q14HJ1"/>
<dbReference type="KEGG" id="ftf:FTF1018c"/>
<dbReference type="HOGENOM" id="CLU_009227_1_4_6"/>
<dbReference type="UniPathway" id="UPA00064">
    <property type="reaction ID" value="UER00091"/>
</dbReference>
<dbReference type="GO" id="GO:0005829">
    <property type="term" value="C:cytosol"/>
    <property type="evidence" value="ECO:0007669"/>
    <property type="project" value="TreeGrafter"/>
</dbReference>
<dbReference type="GO" id="GO:0008661">
    <property type="term" value="F:1-deoxy-D-xylulose-5-phosphate synthase activity"/>
    <property type="evidence" value="ECO:0007669"/>
    <property type="project" value="UniProtKB-UniRule"/>
</dbReference>
<dbReference type="GO" id="GO:0000287">
    <property type="term" value="F:magnesium ion binding"/>
    <property type="evidence" value="ECO:0007669"/>
    <property type="project" value="UniProtKB-UniRule"/>
</dbReference>
<dbReference type="GO" id="GO:0030976">
    <property type="term" value="F:thiamine pyrophosphate binding"/>
    <property type="evidence" value="ECO:0007669"/>
    <property type="project" value="UniProtKB-UniRule"/>
</dbReference>
<dbReference type="GO" id="GO:0052865">
    <property type="term" value="P:1-deoxy-D-xylulose 5-phosphate biosynthetic process"/>
    <property type="evidence" value="ECO:0007669"/>
    <property type="project" value="UniProtKB-UniPathway"/>
</dbReference>
<dbReference type="GO" id="GO:0019288">
    <property type="term" value="P:isopentenyl diphosphate biosynthetic process, methylerythritol 4-phosphate pathway"/>
    <property type="evidence" value="ECO:0007669"/>
    <property type="project" value="TreeGrafter"/>
</dbReference>
<dbReference type="GO" id="GO:0016114">
    <property type="term" value="P:terpenoid biosynthetic process"/>
    <property type="evidence" value="ECO:0007669"/>
    <property type="project" value="UniProtKB-UniRule"/>
</dbReference>
<dbReference type="GO" id="GO:0009228">
    <property type="term" value="P:thiamine biosynthetic process"/>
    <property type="evidence" value="ECO:0007669"/>
    <property type="project" value="UniProtKB-UniRule"/>
</dbReference>
<dbReference type="CDD" id="cd02007">
    <property type="entry name" value="TPP_DXS"/>
    <property type="match status" value="1"/>
</dbReference>
<dbReference type="CDD" id="cd07033">
    <property type="entry name" value="TPP_PYR_DXS_TK_like"/>
    <property type="match status" value="1"/>
</dbReference>
<dbReference type="FunFam" id="3.40.50.970:FF:000005">
    <property type="entry name" value="1-deoxy-D-xylulose-5-phosphate synthase"/>
    <property type="match status" value="1"/>
</dbReference>
<dbReference type="Gene3D" id="3.40.50.920">
    <property type="match status" value="1"/>
</dbReference>
<dbReference type="Gene3D" id="3.40.50.970">
    <property type="match status" value="2"/>
</dbReference>
<dbReference type="HAMAP" id="MF_00315">
    <property type="entry name" value="DXP_synth"/>
    <property type="match status" value="1"/>
</dbReference>
<dbReference type="InterPro" id="IPR005477">
    <property type="entry name" value="Dxylulose-5-P_synthase"/>
</dbReference>
<dbReference type="InterPro" id="IPR029061">
    <property type="entry name" value="THDP-binding"/>
</dbReference>
<dbReference type="InterPro" id="IPR009014">
    <property type="entry name" value="Transketo_C/PFOR_II"/>
</dbReference>
<dbReference type="InterPro" id="IPR005475">
    <property type="entry name" value="Transketolase-like_Pyr-bd"/>
</dbReference>
<dbReference type="InterPro" id="IPR020826">
    <property type="entry name" value="Transketolase_BS"/>
</dbReference>
<dbReference type="InterPro" id="IPR033248">
    <property type="entry name" value="Transketolase_C"/>
</dbReference>
<dbReference type="InterPro" id="IPR049557">
    <property type="entry name" value="Transketolase_CS"/>
</dbReference>
<dbReference type="NCBIfam" id="TIGR00204">
    <property type="entry name" value="dxs"/>
    <property type="match status" value="1"/>
</dbReference>
<dbReference type="NCBIfam" id="NF003933">
    <property type="entry name" value="PRK05444.2-2"/>
    <property type="match status" value="1"/>
</dbReference>
<dbReference type="PANTHER" id="PTHR43322">
    <property type="entry name" value="1-D-DEOXYXYLULOSE 5-PHOSPHATE SYNTHASE-RELATED"/>
    <property type="match status" value="1"/>
</dbReference>
<dbReference type="PANTHER" id="PTHR43322:SF5">
    <property type="entry name" value="1-DEOXY-D-XYLULOSE-5-PHOSPHATE SYNTHASE, CHLOROPLASTIC"/>
    <property type="match status" value="1"/>
</dbReference>
<dbReference type="Pfam" id="PF13292">
    <property type="entry name" value="DXP_synthase_N"/>
    <property type="match status" value="1"/>
</dbReference>
<dbReference type="Pfam" id="PF02779">
    <property type="entry name" value="Transket_pyr"/>
    <property type="match status" value="1"/>
</dbReference>
<dbReference type="Pfam" id="PF02780">
    <property type="entry name" value="Transketolase_C"/>
    <property type="match status" value="1"/>
</dbReference>
<dbReference type="SMART" id="SM00861">
    <property type="entry name" value="Transket_pyr"/>
    <property type="match status" value="1"/>
</dbReference>
<dbReference type="SUPFAM" id="SSF52518">
    <property type="entry name" value="Thiamin diphosphate-binding fold (THDP-binding)"/>
    <property type="match status" value="2"/>
</dbReference>
<dbReference type="SUPFAM" id="SSF52922">
    <property type="entry name" value="TK C-terminal domain-like"/>
    <property type="match status" value="1"/>
</dbReference>
<dbReference type="PROSITE" id="PS00801">
    <property type="entry name" value="TRANSKETOLASE_1"/>
    <property type="match status" value="1"/>
</dbReference>
<dbReference type="PROSITE" id="PS00802">
    <property type="entry name" value="TRANSKETOLASE_2"/>
    <property type="match status" value="1"/>
</dbReference>
<proteinExistence type="inferred from homology"/>
<sequence length="615" mass="67342">MSKYTILDKINTPSDLKLIPESQLKILSAELRAFLVDTLDVSGGHFASSLGATELTVALHYVYNAPYDNIVWDVGHQTYIHKILTGRKDKLVTIKKDGGISGFPKRSESEYDTFGVGHSSTSISAALGMAIADRLQGKSSNTVAVIGDGAITGGMAFEALNHAGGIKEDILVILNDNEMSISDNVGGLSAHFSKIISGGFYNSIREKGKEVLKNIPPIFEFVKKVETQTKGMFVPANFFEDLGFYYVGPIDGHDVTELVKTLRILKDHKGPKLLHVITKKGKGYTKAESDPIKFHHVAPSFHSGENITTKISKPTYSNIFGDWICQKAAKDKRLVGITPAMKEGSDLIRFSQLYPHRYFDVAIAEQHAVTFAGGLACQGLKPVVAIYSTFLQRAYDQVIHDIALQNLDVLYAVDRAGLVGADGATHDGSFDLAFMRCIPNHVIMTPSDENEAYHMLEFGYEYNGPAMVRYPRGAGIGAEITGSLDLELGKAKIVKQGSKIAILNFGTLLPLAKQLAEKYHATVIDMRFVKPLDEIMLDKVSQTHEIILTLEENCIAGGAGSAVNEYFVAKDLSNKIIVRNFGLQDKFLNHGTKDLLLAQSKLCVENISQELDKLI</sequence>
<name>DXS_FRAT1</name>
<accession>Q14HJ1</accession>
<evidence type="ECO:0000255" key="1">
    <source>
        <dbReference type="HAMAP-Rule" id="MF_00315"/>
    </source>
</evidence>
<protein>
    <recommendedName>
        <fullName evidence="1">1-deoxy-D-xylulose-5-phosphate synthase</fullName>
        <ecNumber evidence="1">2.2.1.7</ecNumber>
    </recommendedName>
    <alternativeName>
        <fullName evidence="1">1-deoxyxylulose-5-phosphate synthase</fullName>
        <shortName evidence="1">DXP synthase</shortName>
        <shortName evidence="1">DXPS</shortName>
    </alternativeName>
</protein>
<keyword id="KW-0414">Isoprene biosynthesis</keyword>
<keyword id="KW-0460">Magnesium</keyword>
<keyword id="KW-0479">Metal-binding</keyword>
<keyword id="KW-0784">Thiamine biosynthesis</keyword>
<keyword id="KW-0786">Thiamine pyrophosphate</keyword>
<keyword id="KW-0808">Transferase</keyword>
<reference key="1">
    <citation type="journal article" date="2007" name="PLoS ONE">
        <title>Genome sequencing shows that European isolates of Francisella tularensis subspecies tularensis are almost identical to US laboratory strain Schu S4.</title>
        <authorList>
            <person name="Chaudhuri R.R."/>
            <person name="Ren C.-P."/>
            <person name="Desmond L."/>
            <person name="Vincent G.A."/>
            <person name="Silman N.J."/>
            <person name="Brehm J.K."/>
            <person name="Elmore M.J."/>
            <person name="Hudson M.J."/>
            <person name="Forsman M."/>
            <person name="Isherwood K.E."/>
            <person name="Gurycova D."/>
            <person name="Minton N.P."/>
            <person name="Titball R.W."/>
            <person name="Pallen M.J."/>
            <person name="Vipond R."/>
        </authorList>
    </citation>
    <scope>NUCLEOTIDE SEQUENCE [LARGE SCALE GENOMIC DNA]</scope>
    <source>
        <strain>FSC 198</strain>
    </source>
</reference>